<accession>Q04Q79</accession>
<dbReference type="EC" id="2.5.1.78" evidence="1"/>
<dbReference type="EMBL" id="CP000350">
    <property type="protein sequence ID" value="ABJ76941.1"/>
    <property type="molecule type" value="Genomic_DNA"/>
</dbReference>
<dbReference type="SMR" id="Q04Q79"/>
<dbReference type="KEGG" id="lbj:LBJ_2504"/>
<dbReference type="HOGENOM" id="CLU_089358_1_1_12"/>
<dbReference type="UniPathway" id="UPA00275">
    <property type="reaction ID" value="UER00404"/>
</dbReference>
<dbReference type="Proteomes" id="UP000000656">
    <property type="component" value="Chromosome 1"/>
</dbReference>
<dbReference type="GO" id="GO:0005829">
    <property type="term" value="C:cytosol"/>
    <property type="evidence" value="ECO:0007669"/>
    <property type="project" value="TreeGrafter"/>
</dbReference>
<dbReference type="GO" id="GO:0009349">
    <property type="term" value="C:riboflavin synthase complex"/>
    <property type="evidence" value="ECO:0007669"/>
    <property type="project" value="InterPro"/>
</dbReference>
<dbReference type="GO" id="GO:0000906">
    <property type="term" value="F:6,7-dimethyl-8-ribityllumazine synthase activity"/>
    <property type="evidence" value="ECO:0007669"/>
    <property type="project" value="UniProtKB-UniRule"/>
</dbReference>
<dbReference type="GO" id="GO:0009231">
    <property type="term" value="P:riboflavin biosynthetic process"/>
    <property type="evidence" value="ECO:0007669"/>
    <property type="project" value="UniProtKB-UniRule"/>
</dbReference>
<dbReference type="CDD" id="cd09209">
    <property type="entry name" value="Lumazine_synthase-I"/>
    <property type="match status" value="1"/>
</dbReference>
<dbReference type="FunFam" id="3.40.50.960:FF:000001">
    <property type="entry name" value="6,7-dimethyl-8-ribityllumazine synthase"/>
    <property type="match status" value="1"/>
</dbReference>
<dbReference type="Gene3D" id="3.40.50.960">
    <property type="entry name" value="Lumazine/riboflavin synthase"/>
    <property type="match status" value="1"/>
</dbReference>
<dbReference type="HAMAP" id="MF_00178">
    <property type="entry name" value="Lumazine_synth"/>
    <property type="match status" value="1"/>
</dbReference>
<dbReference type="InterPro" id="IPR034964">
    <property type="entry name" value="LS"/>
</dbReference>
<dbReference type="InterPro" id="IPR002180">
    <property type="entry name" value="LS/RS"/>
</dbReference>
<dbReference type="InterPro" id="IPR036467">
    <property type="entry name" value="LS/RS_sf"/>
</dbReference>
<dbReference type="NCBIfam" id="TIGR00114">
    <property type="entry name" value="lumazine-synth"/>
    <property type="match status" value="1"/>
</dbReference>
<dbReference type="NCBIfam" id="NF000812">
    <property type="entry name" value="PRK00061.1-4"/>
    <property type="match status" value="1"/>
</dbReference>
<dbReference type="PANTHER" id="PTHR21058:SF0">
    <property type="entry name" value="6,7-DIMETHYL-8-RIBITYLLUMAZINE SYNTHASE"/>
    <property type="match status" value="1"/>
</dbReference>
<dbReference type="PANTHER" id="PTHR21058">
    <property type="entry name" value="6,7-DIMETHYL-8-RIBITYLLUMAZINE SYNTHASE DMRL SYNTHASE LUMAZINE SYNTHASE"/>
    <property type="match status" value="1"/>
</dbReference>
<dbReference type="Pfam" id="PF00885">
    <property type="entry name" value="DMRL_synthase"/>
    <property type="match status" value="1"/>
</dbReference>
<dbReference type="SUPFAM" id="SSF52121">
    <property type="entry name" value="Lumazine synthase"/>
    <property type="match status" value="1"/>
</dbReference>
<sequence>MIQELKADLNGKGQKHCVIVSRFNEFITENLLKGALESFRMHGVREEDVTVVRVPGAYEMPVVVAKVAASKKYNSIVCLGAVIRGATAHFDFVAGESAKIGSIGVQHSIPVVFGVLTTDTIEQAIERAGTKAGNKGAEAAATAVEMVNLLSLL</sequence>
<feature type="chain" id="PRO_1000040440" description="6,7-dimethyl-8-ribityllumazine synthase">
    <location>
        <begin position="1"/>
        <end position="153"/>
    </location>
</feature>
<feature type="active site" description="Proton donor" evidence="1">
    <location>
        <position position="89"/>
    </location>
</feature>
<feature type="binding site" evidence="1">
    <location>
        <position position="23"/>
    </location>
    <ligand>
        <name>5-amino-6-(D-ribitylamino)uracil</name>
        <dbReference type="ChEBI" id="CHEBI:15934"/>
    </ligand>
</feature>
<feature type="binding site" evidence="1">
    <location>
        <begin position="57"/>
        <end position="59"/>
    </location>
    <ligand>
        <name>5-amino-6-(D-ribitylamino)uracil</name>
        <dbReference type="ChEBI" id="CHEBI:15934"/>
    </ligand>
</feature>
<feature type="binding site" evidence="1">
    <location>
        <begin position="81"/>
        <end position="83"/>
    </location>
    <ligand>
        <name>5-amino-6-(D-ribitylamino)uracil</name>
        <dbReference type="ChEBI" id="CHEBI:15934"/>
    </ligand>
</feature>
<feature type="binding site" evidence="1">
    <location>
        <begin position="86"/>
        <end position="87"/>
    </location>
    <ligand>
        <name>(2S)-2-hydroxy-3-oxobutyl phosphate</name>
        <dbReference type="ChEBI" id="CHEBI:58830"/>
    </ligand>
</feature>
<feature type="binding site" evidence="1">
    <location>
        <position position="113"/>
    </location>
    <ligand>
        <name>5-amino-6-(D-ribitylamino)uracil</name>
        <dbReference type="ChEBI" id="CHEBI:15934"/>
    </ligand>
</feature>
<feature type="binding site" evidence="1">
    <location>
        <position position="127"/>
    </location>
    <ligand>
        <name>(2S)-2-hydroxy-3-oxobutyl phosphate</name>
        <dbReference type="ChEBI" id="CHEBI:58830"/>
    </ligand>
</feature>
<organism>
    <name type="scientific">Leptospira borgpetersenii serovar Hardjo-bovis (strain JB197)</name>
    <dbReference type="NCBI Taxonomy" id="355277"/>
    <lineage>
        <taxon>Bacteria</taxon>
        <taxon>Pseudomonadati</taxon>
        <taxon>Spirochaetota</taxon>
        <taxon>Spirochaetia</taxon>
        <taxon>Leptospirales</taxon>
        <taxon>Leptospiraceae</taxon>
        <taxon>Leptospira</taxon>
    </lineage>
</organism>
<name>RISB_LEPBJ</name>
<comment type="function">
    <text evidence="1">Catalyzes the formation of 6,7-dimethyl-8-ribityllumazine by condensation of 5-amino-6-(D-ribitylamino)uracil with 3,4-dihydroxy-2-butanone 4-phosphate. This is the penultimate step in the biosynthesis of riboflavin.</text>
</comment>
<comment type="catalytic activity">
    <reaction evidence="1">
        <text>(2S)-2-hydroxy-3-oxobutyl phosphate + 5-amino-6-(D-ribitylamino)uracil = 6,7-dimethyl-8-(1-D-ribityl)lumazine + phosphate + 2 H2O + H(+)</text>
        <dbReference type="Rhea" id="RHEA:26152"/>
        <dbReference type="ChEBI" id="CHEBI:15377"/>
        <dbReference type="ChEBI" id="CHEBI:15378"/>
        <dbReference type="ChEBI" id="CHEBI:15934"/>
        <dbReference type="ChEBI" id="CHEBI:43474"/>
        <dbReference type="ChEBI" id="CHEBI:58201"/>
        <dbReference type="ChEBI" id="CHEBI:58830"/>
        <dbReference type="EC" id="2.5.1.78"/>
    </reaction>
</comment>
<comment type="pathway">
    <text evidence="1">Cofactor biosynthesis; riboflavin biosynthesis; riboflavin from 2-hydroxy-3-oxobutyl phosphate and 5-amino-6-(D-ribitylamino)uracil: step 1/2.</text>
</comment>
<comment type="similarity">
    <text evidence="1">Belongs to the DMRL synthase family.</text>
</comment>
<keyword id="KW-0686">Riboflavin biosynthesis</keyword>
<keyword id="KW-0808">Transferase</keyword>
<evidence type="ECO:0000255" key="1">
    <source>
        <dbReference type="HAMAP-Rule" id="MF_00178"/>
    </source>
</evidence>
<reference key="1">
    <citation type="journal article" date="2006" name="Proc. Natl. Acad. Sci. U.S.A.">
        <title>Genome reduction in Leptospira borgpetersenii reflects limited transmission potential.</title>
        <authorList>
            <person name="Bulach D.M."/>
            <person name="Zuerner R.L."/>
            <person name="Wilson P."/>
            <person name="Seemann T."/>
            <person name="McGrath A."/>
            <person name="Cullen P.A."/>
            <person name="Davis J."/>
            <person name="Johnson M."/>
            <person name="Kuczek E."/>
            <person name="Alt D.P."/>
            <person name="Peterson-Burch B."/>
            <person name="Coppel R.L."/>
            <person name="Rood J.I."/>
            <person name="Davies J.K."/>
            <person name="Adler B."/>
        </authorList>
    </citation>
    <scope>NUCLEOTIDE SEQUENCE [LARGE SCALE GENOMIC DNA]</scope>
    <source>
        <strain>JB197</strain>
    </source>
</reference>
<proteinExistence type="inferred from homology"/>
<gene>
    <name evidence="1" type="primary">ribH</name>
    <name type="ordered locus">LBJ_2504</name>
</gene>
<protein>
    <recommendedName>
        <fullName evidence="1">6,7-dimethyl-8-ribityllumazine synthase</fullName>
        <shortName evidence="1">DMRL synthase</shortName>
        <shortName evidence="1">LS</shortName>
        <shortName evidence="1">Lumazine synthase</shortName>
        <ecNumber evidence="1">2.5.1.78</ecNumber>
    </recommendedName>
</protein>